<feature type="chain" id="PRO_0000229398" description="GMP synthase [glutamine-hydrolyzing]">
    <location>
        <begin position="1"/>
        <end position="529"/>
    </location>
</feature>
<feature type="domain" description="Glutamine amidotransferase type-1" evidence="1">
    <location>
        <begin position="3"/>
        <end position="204"/>
    </location>
</feature>
<feature type="domain" description="GMPS ATP-PPase" evidence="1">
    <location>
        <begin position="205"/>
        <end position="395"/>
    </location>
</feature>
<feature type="active site" description="Nucleophile" evidence="1">
    <location>
        <position position="87"/>
    </location>
</feature>
<feature type="active site" evidence="1">
    <location>
        <position position="179"/>
    </location>
</feature>
<feature type="active site" evidence="1">
    <location>
        <position position="181"/>
    </location>
</feature>
<feature type="binding site" evidence="1">
    <location>
        <begin position="232"/>
        <end position="238"/>
    </location>
    <ligand>
        <name>ATP</name>
        <dbReference type="ChEBI" id="CHEBI:30616"/>
    </ligand>
</feature>
<keyword id="KW-0067">ATP-binding</keyword>
<keyword id="KW-0315">Glutamine amidotransferase</keyword>
<keyword id="KW-0332">GMP biosynthesis</keyword>
<keyword id="KW-0436">Ligase</keyword>
<keyword id="KW-0547">Nucleotide-binding</keyword>
<keyword id="KW-0658">Purine biosynthesis</keyword>
<organism>
    <name type="scientific">Anaplasma marginale (strain St. Maries)</name>
    <dbReference type="NCBI Taxonomy" id="234826"/>
    <lineage>
        <taxon>Bacteria</taxon>
        <taxon>Pseudomonadati</taxon>
        <taxon>Pseudomonadota</taxon>
        <taxon>Alphaproteobacteria</taxon>
        <taxon>Rickettsiales</taxon>
        <taxon>Anaplasmataceae</taxon>
        <taxon>Anaplasma</taxon>
    </lineage>
</organism>
<gene>
    <name evidence="1" type="primary">guaA</name>
    <name type="ordered locus">AM1188</name>
</gene>
<accession>Q5P9L5</accession>
<comment type="function">
    <text evidence="1">Catalyzes the synthesis of GMP from XMP.</text>
</comment>
<comment type="catalytic activity">
    <reaction evidence="1">
        <text>XMP + L-glutamine + ATP + H2O = GMP + L-glutamate + AMP + diphosphate + 2 H(+)</text>
        <dbReference type="Rhea" id="RHEA:11680"/>
        <dbReference type="ChEBI" id="CHEBI:15377"/>
        <dbReference type="ChEBI" id="CHEBI:15378"/>
        <dbReference type="ChEBI" id="CHEBI:29985"/>
        <dbReference type="ChEBI" id="CHEBI:30616"/>
        <dbReference type="ChEBI" id="CHEBI:33019"/>
        <dbReference type="ChEBI" id="CHEBI:57464"/>
        <dbReference type="ChEBI" id="CHEBI:58115"/>
        <dbReference type="ChEBI" id="CHEBI:58359"/>
        <dbReference type="ChEBI" id="CHEBI:456215"/>
        <dbReference type="EC" id="6.3.5.2"/>
    </reaction>
</comment>
<comment type="pathway">
    <text evidence="1">Purine metabolism; GMP biosynthesis; GMP from XMP (L-Gln route): step 1/1.</text>
</comment>
<comment type="subunit">
    <text evidence="1">Homodimer.</text>
</comment>
<proteinExistence type="inferred from homology"/>
<dbReference type="EC" id="6.3.5.2" evidence="1"/>
<dbReference type="EMBL" id="CP000030">
    <property type="protein sequence ID" value="AAV87015.1"/>
    <property type="molecule type" value="Genomic_DNA"/>
</dbReference>
<dbReference type="RefSeq" id="WP_010266249.1">
    <property type="nucleotide sequence ID" value="NZ_AFMU01000038.1"/>
</dbReference>
<dbReference type="SMR" id="Q5P9L5"/>
<dbReference type="MEROPS" id="C26.A07"/>
<dbReference type="KEGG" id="ama:AM1188"/>
<dbReference type="HOGENOM" id="CLU_014340_0_5_5"/>
<dbReference type="UniPathway" id="UPA00189">
    <property type="reaction ID" value="UER00296"/>
</dbReference>
<dbReference type="GO" id="GO:0005829">
    <property type="term" value="C:cytosol"/>
    <property type="evidence" value="ECO:0007669"/>
    <property type="project" value="TreeGrafter"/>
</dbReference>
<dbReference type="GO" id="GO:0005524">
    <property type="term" value="F:ATP binding"/>
    <property type="evidence" value="ECO:0007669"/>
    <property type="project" value="UniProtKB-UniRule"/>
</dbReference>
<dbReference type="GO" id="GO:0003921">
    <property type="term" value="F:GMP synthase activity"/>
    <property type="evidence" value="ECO:0007669"/>
    <property type="project" value="InterPro"/>
</dbReference>
<dbReference type="CDD" id="cd01742">
    <property type="entry name" value="GATase1_GMP_Synthase"/>
    <property type="match status" value="1"/>
</dbReference>
<dbReference type="CDD" id="cd01997">
    <property type="entry name" value="GMP_synthase_C"/>
    <property type="match status" value="1"/>
</dbReference>
<dbReference type="FunFam" id="3.30.300.10:FF:000002">
    <property type="entry name" value="GMP synthase [glutamine-hydrolyzing]"/>
    <property type="match status" value="1"/>
</dbReference>
<dbReference type="Gene3D" id="3.30.300.10">
    <property type="match status" value="1"/>
</dbReference>
<dbReference type="Gene3D" id="3.40.50.880">
    <property type="match status" value="1"/>
</dbReference>
<dbReference type="Gene3D" id="3.40.50.620">
    <property type="entry name" value="HUPs"/>
    <property type="match status" value="1"/>
</dbReference>
<dbReference type="HAMAP" id="MF_00344">
    <property type="entry name" value="GMP_synthase"/>
    <property type="match status" value="1"/>
</dbReference>
<dbReference type="InterPro" id="IPR029062">
    <property type="entry name" value="Class_I_gatase-like"/>
</dbReference>
<dbReference type="InterPro" id="IPR017926">
    <property type="entry name" value="GATASE"/>
</dbReference>
<dbReference type="InterPro" id="IPR001674">
    <property type="entry name" value="GMP_synth_C"/>
</dbReference>
<dbReference type="InterPro" id="IPR004739">
    <property type="entry name" value="GMP_synth_GATase"/>
</dbReference>
<dbReference type="InterPro" id="IPR022955">
    <property type="entry name" value="GMP_synthase"/>
</dbReference>
<dbReference type="InterPro" id="IPR025777">
    <property type="entry name" value="GMPS_ATP_PPase_dom"/>
</dbReference>
<dbReference type="InterPro" id="IPR014729">
    <property type="entry name" value="Rossmann-like_a/b/a_fold"/>
</dbReference>
<dbReference type="NCBIfam" id="TIGR00884">
    <property type="entry name" value="guaA_Cterm"/>
    <property type="match status" value="1"/>
</dbReference>
<dbReference type="NCBIfam" id="TIGR00888">
    <property type="entry name" value="guaA_Nterm"/>
    <property type="match status" value="1"/>
</dbReference>
<dbReference type="NCBIfam" id="NF000848">
    <property type="entry name" value="PRK00074.1"/>
    <property type="match status" value="1"/>
</dbReference>
<dbReference type="PANTHER" id="PTHR11922:SF2">
    <property type="entry name" value="GMP SYNTHASE [GLUTAMINE-HYDROLYZING]"/>
    <property type="match status" value="1"/>
</dbReference>
<dbReference type="PANTHER" id="PTHR11922">
    <property type="entry name" value="GMP SYNTHASE-RELATED"/>
    <property type="match status" value="1"/>
</dbReference>
<dbReference type="Pfam" id="PF00117">
    <property type="entry name" value="GATase"/>
    <property type="match status" value="1"/>
</dbReference>
<dbReference type="Pfam" id="PF00958">
    <property type="entry name" value="GMP_synt_C"/>
    <property type="match status" value="1"/>
</dbReference>
<dbReference type="PRINTS" id="PR00096">
    <property type="entry name" value="GATASE"/>
</dbReference>
<dbReference type="SUPFAM" id="SSF52402">
    <property type="entry name" value="Adenine nucleotide alpha hydrolases-like"/>
    <property type="match status" value="1"/>
</dbReference>
<dbReference type="SUPFAM" id="SSF52317">
    <property type="entry name" value="Class I glutamine amidotransferase-like"/>
    <property type="match status" value="1"/>
</dbReference>
<dbReference type="SUPFAM" id="SSF54810">
    <property type="entry name" value="GMP synthetase C-terminal dimerisation domain"/>
    <property type="match status" value="1"/>
</dbReference>
<dbReference type="PROSITE" id="PS51273">
    <property type="entry name" value="GATASE_TYPE_1"/>
    <property type="match status" value="1"/>
</dbReference>
<dbReference type="PROSITE" id="PS51553">
    <property type="entry name" value="GMPS_ATP_PPASE"/>
    <property type="match status" value="1"/>
</dbReference>
<sequence>MSTVAIVDFGSQVTQLIARRVRELGVYSEVFPPSTDFQAMASRGIKIDAFILSGGPNSVQQLHGVPNAVSDVLNLNLQKGVPVLGICYGFQMLAHYFGADVAQSVAREFGRAWLDVIEPSSITEGVWSLGSKVDVWMSHSDSIVGEVPQGFRVVARSADTGAVAFMCNDERKIYGVQFHPEVAHTPGGREMLDNFLKIAGCTRDWTMGSFLHTQIGAIKSATDGGRVVAAISGGVDSSVASVLVHKAIGERLVCVFVDTGLLRKGEAGVVRDLFVGKLNMHVNVLDKSALFMQRLAGVQDPEVKRKIIGETFIEVFEQEAKSLGDIKFLMQGTIYPDVIESGVGESGTKIKSHHNVGGLPEIMNLSLVEPLRHLFKDEVRLLGKELGLPSAILDRHPFPGPGLAVRIMGEVTAERVELLREIDNIYIDMMRDSGLYDHIWQAFAVLVPVRTVGVMGDGRTYGYVCALRAVTSSDGMTADCFPFGETDERKLEFLAFLQKVSRAIVSNLQGVNRVVYDMTSKPPATIEWE</sequence>
<reference key="1">
    <citation type="journal article" date="2005" name="Proc. Natl. Acad. Sci. U.S.A.">
        <title>Complete genome sequencing of Anaplasma marginale reveals that the surface is skewed to two superfamilies of outer membrane proteins.</title>
        <authorList>
            <person name="Brayton K.A."/>
            <person name="Kappmeyer L.S."/>
            <person name="Herndon D.R."/>
            <person name="Dark M.J."/>
            <person name="Tibbals D.L."/>
            <person name="Palmer G.H."/>
            <person name="McGuire T.C."/>
            <person name="Knowles D.P. Jr."/>
        </authorList>
    </citation>
    <scope>NUCLEOTIDE SEQUENCE [LARGE SCALE GENOMIC DNA]</scope>
    <source>
        <strain>St. Maries</strain>
    </source>
</reference>
<protein>
    <recommendedName>
        <fullName evidence="1">GMP synthase [glutamine-hydrolyzing]</fullName>
        <ecNumber evidence="1">6.3.5.2</ecNumber>
    </recommendedName>
    <alternativeName>
        <fullName evidence="1">GMP synthetase</fullName>
    </alternativeName>
    <alternativeName>
        <fullName evidence="1">Glutamine amidotransferase</fullName>
    </alternativeName>
</protein>
<evidence type="ECO:0000255" key="1">
    <source>
        <dbReference type="HAMAP-Rule" id="MF_00344"/>
    </source>
</evidence>
<name>GUAA_ANAMM</name>